<keyword id="KW-0112">Calmodulin-binding</keyword>
<keyword id="KW-0449">Lipoprotein</keyword>
<keyword id="KW-0472">Membrane</keyword>
<keyword id="KW-0496">Mitochondrion</keyword>
<keyword id="KW-0519">Myristate</keyword>
<keyword id="KW-0597">Phosphoprotein</keyword>
<keyword id="KW-1185">Reference proteome</keyword>
<comment type="function">
    <text evidence="1">May be involved in cell proliferation and survival of hormone-dependent tumor cells. Involved in the assembly of mitochondrial NADH:ubiquinone oxidoreductase complex (complex I) (By similarity).</text>
</comment>
<comment type="subunit">
    <text evidence="1">Binds calmodulin. Interacts with NDUFAF3.</text>
</comment>
<comment type="subcellular location">
    <subcellularLocation>
        <location evidence="1">Mitochondrion</location>
    </subcellularLocation>
    <subcellularLocation>
        <location evidence="2">Membrane</location>
        <topology evidence="2">Lipid-anchor</topology>
    </subcellularLocation>
</comment>
<comment type="PTM">
    <text evidence="1">Phosphorylated on serine. Prolactin stimulate serine phosphorylation (By similarity).</text>
</comment>
<comment type="similarity">
    <text evidence="3">Belongs to the NDUFAF4 family.</text>
</comment>
<name>NDUF4_PONAB</name>
<dbReference type="EMBL" id="CR861175">
    <property type="protein sequence ID" value="CAH93247.1"/>
    <property type="molecule type" value="mRNA"/>
</dbReference>
<dbReference type="RefSeq" id="NP_001126910.1">
    <property type="nucleotide sequence ID" value="NM_001133438.1"/>
</dbReference>
<dbReference type="SMR" id="Q5R4R9"/>
<dbReference type="FunCoup" id="Q5R4R9">
    <property type="interactions" value="1084"/>
</dbReference>
<dbReference type="STRING" id="9601.ENSPPYP00000018869"/>
<dbReference type="GeneID" id="100173927"/>
<dbReference type="KEGG" id="pon:100173927"/>
<dbReference type="CTD" id="29078"/>
<dbReference type="eggNOG" id="KOG4481">
    <property type="taxonomic scope" value="Eukaryota"/>
</dbReference>
<dbReference type="InParanoid" id="Q5R4R9"/>
<dbReference type="OrthoDB" id="2434756at2759"/>
<dbReference type="Proteomes" id="UP000001595">
    <property type="component" value="Unplaced"/>
</dbReference>
<dbReference type="GO" id="GO:0016020">
    <property type="term" value="C:membrane"/>
    <property type="evidence" value="ECO:0007669"/>
    <property type="project" value="UniProtKB-SubCell"/>
</dbReference>
<dbReference type="GO" id="GO:0005739">
    <property type="term" value="C:mitochondrion"/>
    <property type="evidence" value="ECO:0007669"/>
    <property type="project" value="UniProtKB-SubCell"/>
</dbReference>
<dbReference type="GO" id="GO:0005516">
    <property type="term" value="F:calmodulin binding"/>
    <property type="evidence" value="ECO:0007669"/>
    <property type="project" value="UniProtKB-KW"/>
</dbReference>
<dbReference type="GO" id="GO:0032981">
    <property type="term" value="P:mitochondrial respiratory chain complex I assembly"/>
    <property type="evidence" value="ECO:0007669"/>
    <property type="project" value="InterPro"/>
</dbReference>
<dbReference type="InterPro" id="IPR009622">
    <property type="entry name" value="NDUFAF4"/>
</dbReference>
<dbReference type="PANTHER" id="PTHR13338:SF6">
    <property type="entry name" value="NADH DEHYDROGENASE [UBIQUINONE] 1 ALPHA SUBCOMPLEX ASSEMBLY FACTOR 4"/>
    <property type="match status" value="1"/>
</dbReference>
<dbReference type="PANTHER" id="PTHR13338">
    <property type="entry name" value="UPF0240 PROTEIN"/>
    <property type="match status" value="1"/>
</dbReference>
<dbReference type="Pfam" id="PF06784">
    <property type="entry name" value="UPF0240"/>
    <property type="match status" value="1"/>
</dbReference>
<reference key="1">
    <citation type="submission" date="2004-11" db="EMBL/GenBank/DDBJ databases">
        <authorList>
            <consortium name="The German cDNA consortium"/>
        </authorList>
    </citation>
    <scope>NUCLEOTIDE SEQUENCE [LARGE SCALE MRNA]</scope>
    <source>
        <tissue>Brain cortex</tissue>
    </source>
</reference>
<feature type="initiator methionine" description="Removed" evidence="2">
    <location>
        <position position="1"/>
    </location>
</feature>
<feature type="chain" id="PRO_0000284126" description="NADH dehydrogenase [ubiquinone] 1 alpha subcomplex assembly factor 4">
    <location>
        <begin position="2"/>
        <end position="175"/>
    </location>
</feature>
<feature type="modified residue" description="Phosphoserine" evidence="2">
    <location>
        <position position="35"/>
    </location>
</feature>
<feature type="lipid moiety-binding region" description="N-myristoyl glycine" evidence="2">
    <location>
        <position position="2"/>
    </location>
</feature>
<proteinExistence type="evidence at transcript level"/>
<organism>
    <name type="scientific">Pongo abelii</name>
    <name type="common">Sumatran orangutan</name>
    <name type="synonym">Pongo pygmaeus abelii</name>
    <dbReference type="NCBI Taxonomy" id="9601"/>
    <lineage>
        <taxon>Eukaryota</taxon>
        <taxon>Metazoa</taxon>
        <taxon>Chordata</taxon>
        <taxon>Craniata</taxon>
        <taxon>Vertebrata</taxon>
        <taxon>Euteleostomi</taxon>
        <taxon>Mammalia</taxon>
        <taxon>Eutheria</taxon>
        <taxon>Euarchontoglires</taxon>
        <taxon>Primates</taxon>
        <taxon>Haplorrhini</taxon>
        <taxon>Catarrhini</taxon>
        <taxon>Hominidae</taxon>
        <taxon>Pongo</taxon>
    </lineage>
</organism>
<sequence length="175" mass="20054">MGALVIRGIRNFNLENRAEREISKMKPSVAPRHPSTNSLLREQISLYPEVKGEIARKDNKLLSLLKDVYVDSRDPVPSLQVQAAETCQEPKEFRLPKDHHLDMINTKSIPKGKISITEALSLLNNHKLFPETWTAEKIAQEYQLEQKDVNSLLKYFATFEVEIFPPEDTKAIQSK</sequence>
<accession>Q5R4R9</accession>
<protein>
    <recommendedName>
        <fullName>NADH dehydrogenase [ubiquinone] 1 alpha subcomplex assembly factor 4</fullName>
    </recommendedName>
    <alternativeName>
        <fullName>Hormone-regulated proliferation-associated protein of 20 kDa homolog</fullName>
    </alternativeName>
    <alternativeName>
        <fullName>Protein HRPAP20</fullName>
    </alternativeName>
</protein>
<evidence type="ECO:0000250" key="1"/>
<evidence type="ECO:0000250" key="2">
    <source>
        <dbReference type="UniProtKB" id="Q9P032"/>
    </source>
</evidence>
<evidence type="ECO:0000305" key="3"/>
<gene>
    <name type="primary">NDUFAF4</name>
    <name type="synonym">HRPAP20</name>
</gene>